<comment type="function">
    <text evidence="1 2 3">Binds promoter DNA and regulates initiation of transcription (By similarity). Required for normal mitochondrial transcription and translation, and for normal assembly of mitochondrial respiratory complexes (PubMed:17662942, PubMed:23300484). Required for normal mitochondrial function (PubMed:17662942, PubMed:23300484). Maintains 16S rRNA levels and functions in mitochondrial ribosome assembly by regulating the biogenesis of the 39S ribosomal subunit (PubMed:17662942, PubMed:23300484).</text>
</comment>
<comment type="subcellular location">
    <subcellularLocation>
        <location evidence="1">Mitochondrion</location>
    </subcellularLocation>
</comment>
<comment type="domain">
    <text evidence="1">Contains seven structural repeats of about 35 residues, where each repeat contains three helices. The repeats form a superhelical structure with a solenoid shape.</text>
</comment>
<comment type="disruption phenotype">
    <text evidence="2">Embryonic lethality, due to severe mitochondrial dysfunction. Embryos are much smaller than normal and none survive past 10.5 dpc.</text>
</comment>
<comment type="similarity">
    <text evidence="4">Belongs to the mTERF family.</text>
</comment>
<gene>
    <name type="primary">Mterf3</name>
    <name type="synonym">Mterfd1</name>
    <name type="ordered locus">CGI-12</name>
</gene>
<reference key="1">
    <citation type="journal article" date="2005" name="Science">
        <title>The transcriptional landscape of the mammalian genome.</title>
        <authorList>
            <person name="Carninci P."/>
            <person name="Kasukawa T."/>
            <person name="Katayama S."/>
            <person name="Gough J."/>
            <person name="Frith M.C."/>
            <person name="Maeda N."/>
            <person name="Oyama R."/>
            <person name="Ravasi T."/>
            <person name="Lenhard B."/>
            <person name="Wells C."/>
            <person name="Kodzius R."/>
            <person name="Shimokawa K."/>
            <person name="Bajic V.B."/>
            <person name="Brenner S.E."/>
            <person name="Batalov S."/>
            <person name="Forrest A.R."/>
            <person name="Zavolan M."/>
            <person name="Davis M.J."/>
            <person name="Wilming L.G."/>
            <person name="Aidinis V."/>
            <person name="Allen J.E."/>
            <person name="Ambesi-Impiombato A."/>
            <person name="Apweiler R."/>
            <person name="Aturaliya R.N."/>
            <person name="Bailey T.L."/>
            <person name="Bansal M."/>
            <person name="Baxter L."/>
            <person name="Beisel K.W."/>
            <person name="Bersano T."/>
            <person name="Bono H."/>
            <person name="Chalk A.M."/>
            <person name="Chiu K.P."/>
            <person name="Choudhary V."/>
            <person name="Christoffels A."/>
            <person name="Clutterbuck D.R."/>
            <person name="Crowe M.L."/>
            <person name="Dalla E."/>
            <person name="Dalrymple B.P."/>
            <person name="de Bono B."/>
            <person name="Della Gatta G."/>
            <person name="di Bernardo D."/>
            <person name="Down T."/>
            <person name="Engstrom P."/>
            <person name="Fagiolini M."/>
            <person name="Faulkner G."/>
            <person name="Fletcher C.F."/>
            <person name="Fukushima T."/>
            <person name="Furuno M."/>
            <person name="Futaki S."/>
            <person name="Gariboldi M."/>
            <person name="Georgii-Hemming P."/>
            <person name="Gingeras T.R."/>
            <person name="Gojobori T."/>
            <person name="Green R.E."/>
            <person name="Gustincich S."/>
            <person name="Harbers M."/>
            <person name="Hayashi Y."/>
            <person name="Hensch T.K."/>
            <person name="Hirokawa N."/>
            <person name="Hill D."/>
            <person name="Huminiecki L."/>
            <person name="Iacono M."/>
            <person name="Ikeo K."/>
            <person name="Iwama A."/>
            <person name="Ishikawa T."/>
            <person name="Jakt M."/>
            <person name="Kanapin A."/>
            <person name="Katoh M."/>
            <person name="Kawasawa Y."/>
            <person name="Kelso J."/>
            <person name="Kitamura H."/>
            <person name="Kitano H."/>
            <person name="Kollias G."/>
            <person name="Krishnan S.P."/>
            <person name="Kruger A."/>
            <person name="Kummerfeld S.K."/>
            <person name="Kurochkin I.V."/>
            <person name="Lareau L.F."/>
            <person name="Lazarevic D."/>
            <person name="Lipovich L."/>
            <person name="Liu J."/>
            <person name="Liuni S."/>
            <person name="McWilliam S."/>
            <person name="Madan Babu M."/>
            <person name="Madera M."/>
            <person name="Marchionni L."/>
            <person name="Matsuda H."/>
            <person name="Matsuzawa S."/>
            <person name="Miki H."/>
            <person name="Mignone F."/>
            <person name="Miyake S."/>
            <person name="Morris K."/>
            <person name="Mottagui-Tabar S."/>
            <person name="Mulder N."/>
            <person name="Nakano N."/>
            <person name="Nakauchi H."/>
            <person name="Ng P."/>
            <person name="Nilsson R."/>
            <person name="Nishiguchi S."/>
            <person name="Nishikawa S."/>
            <person name="Nori F."/>
            <person name="Ohara O."/>
            <person name="Okazaki Y."/>
            <person name="Orlando V."/>
            <person name="Pang K.C."/>
            <person name="Pavan W.J."/>
            <person name="Pavesi G."/>
            <person name="Pesole G."/>
            <person name="Petrovsky N."/>
            <person name="Piazza S."/>
            <person name="Reed J."/>
            <person name="Reid J.F."/>
            <person name="Ring B.Z."/>
            <person name="Ringwald M."/>
            <person name="Rost B."/>
            <person name="Ruan Y."/>
            <person name="Salzberg S.L."/>
            <person name="Sandelin A."/>
            <person name="Schneider C."/>
            <person name="Schoenbach C."/>
            <person name="Sekiguchi K."/>
            <person name="Semple C.A."/>
            <person name="Seno S."/>
            <person name="Sessa L."/>
            <person name="Sheng Y."/>
            <person name="Shibata Y."/>
            <person name="Shimada H."/>
            <person name="Shimada K."/>
            <person name="Silva D."/>
            <person name="Sinclair B."/>
            <person name="Sperling S."/>
            <person name="Stupka E."/>
            <person name="Sugiura K."/>
            <person name="Sultana R."/>
            <person name="Takenaka Y."/>
            <person name="Taki K."/>
            <person name="Tammoja K."/>
            <person name="Tan S.L."/>
            <person name="Tang S."/>
            <person name="Taylor M.S."/>
            <person name="Tegner J."/>
            <person name="Teichmann S.A."/>
            <person name="Ueda H.R."/>
            <person name="van Nimwegen E."/>
            <person name="Verardo R."/>
            <person name="Wei C.L."/>
            <person name="Yagi K."/>
            <person name="Yamanishi H."/>
            <person name="Zabarovsky E."/>
            <person name="Zhu S."/>
            <person name="Zimmer A."/>
            <person name="Hide W."/>
            <person name="Bult C."/>
            <person name="Grimmond S.M."/>
            <person name="Teasdale R.D."/>
            <person name="Liu E.T."/>
            <person name="Brusic V."/>
            <person name="Quackenbush J."/>
            <person name="Wahlestedt C."/>
            <person name="Mattick J.S."/>
            <person name="Hume D.A."/>
            <person name="Kai C."/>
            <person name="Sasaki D."/>
            <person name="Tomaru Y."/>
            <person name="Fukuda S."/>
            <person name="Kanamori-Katayama M."/>
            <person name="Suzuki M."/>
            <person name="Aoki J."/>
            <person name="Arakawa T."/>
            <person name="Iida J."/>
            <person name="Imamura K."/>
            <person name="Itoh M."/>
            <person name="Kato T."/>
            <person name="Kawaji H."/>
            <person name="Kawagashira N."/>
            <person name="Kawashima T."/>
            <person name="Kojima M."/>
            <person name="Kondo S."/>
            <person name="Konno H."/>
            <person name="Nakano K."/>
            <person name="Ninomiya N."/>
            <person name="Nishio T."/>
            <person name="Okada M."/>
            <person name="Plessy C."/>
            <person name="Shibata K."/>
            <person name="Shiraki T."/>
            <person name="Suzuki S."/>
            <person name="Tagami M."/>
            <person name="Waki K."/>
            <person name="Watahiki A."/>
            <person name="Okamura-Oho Y."/>
            <person name="Suzuki H."/>
            <person name="Kawai J."/>
            <person name="Hayashizaki Y."/>
        </authorList>
    </citation>
    <scope>NUCLEOTIDE SEQUENCE [LARGE SCALE MRNA]</scope>
    <source>
        <strain>C57BL/6J</strain>
        <tissue>Embryonic stem cell</tissue>
    </source>
</reference>
<reference key="2">
    <citation type="journal article" date="2004" name="Genome Res.">
        <title>The status, quality, and expansion of the NIH full-length cDNA project: the Mammalian Gene Collection (MGC).</title>
        <authorList>
            <consortium name="The MGC Project Team"/>
        </authorList>
    </citation>
    <scope>NUCLEOTIDE SEQUENCE [LARGE SCALE MRNA]</scope>
    <source>
        <strain>C57BL/6J</strain>
        <strain>FVB/N-3</strain>
        <tissue>Kidney</tissue>
        <tissue>Mammary tumor</tissue>
    </source>
</reference>
<reference key="3">
    <citation type="journal article" date="2007" name="Cell">
        <title>MTERF3 is a negative regulator of mammalian mtDNA transcription.</title>
        <authorList>
            <person name="Park C.B."/>
            <person name="Asin-Cayuela J."/>
            <person name="Camara Y."/>
            <person name="Shi Y."/>
            <person name="Pellegrini M."/>
            <person name="Gaspari M."/>
            <person name="Wibom R."/>
            <person name="Hultenby K."/>
            <person name="Erdjument-Bromage H."/>
            <person name="Tempst P."/>
            <person name="Falkenberg M."/>
            <person name="Gustafsson C.M."/>
            <person name="Larsson N.G."/>
        </authorList>
    </citation>
    <scope>DISRUPTION PHENOTYPE</scope>
    <scope>FUNCTION</scope>
</reference>
<reference key="4">
    <citation type="journal article" date="2013" name="PLoS Genet.">
        <title>MTERF3 regulates mitochondrial ribosome biogenesis in invertebrates and mammals.</title>
        <authorList>
            <person name="Wredenberg A."/>
            <person name="Lagouge M."/>
            <person name="Bratic A."/>
            <person name="Metodiev M.D."/>
            <person name="Spaahr H."/>
            <person name="Mourier A."/>
            <person name="Freyer C."/>
            <person name="Ruzzenente B."/>
            <person name="Tain L."/>
            <person name="Groenke S."/>
            <person name="Baggio F."/>
            <person name="Kukat C."/>
            <person name="Kremmer E."/>
            <person name="Wibom R."/>
            <person name="Polosa P.L."/>
            <person name="Habermann B."/>
            <person name="Partridge L."/>
            <person name="Park C.B."/>
            <person name="Larsson N.G."/>
        </authorList>
    </citation>
    <scope>FUNCTION</scope>
</reference>
<proteinExistence type="evidence at transcript level"/>
<protein>
    <recommendedName>
        <fullName>Transcription termination factor 3, mitochondrial</fullName>
    </recommendedName>
    <alternativeName>
        <fullName>Mitochondrial transcription termination factor 3</fullName>
        <shortName>mTERF3</shortName>
    </alternativeName>
    <alternativeName>
        <fullName>mTERF domain-containing protein 1, mitochondrial</fullName>
    </alternativeName>
</protein>
<dbReference type="EMBL" id="AK010525">
    <property type="protein sequence ID" value="BAB27006.1"/>
    <property type="molecule type" value="mRNA"/>
</dbReference>
<dbReference type="EMBL" id="AK011934">
    <property type="protein sequence ID" value="BAB27924.3"/>
    <property type="molecule type" value="mRNA"/>
</dbReference>
<dbReference type="EMBL" id="BC025173">
    <property type="protein sequence ID" value="AAH25173.1"/>
    <property type="molecule type" value="mRNA"/>
</dbReference>
<dbReference type="EMBL" id="BC085282">
    <property type="protein sequence ID" value="AAH85282.1"/>
    <property type="molecule type" value="mRNA"/>
</dbReference>
<dbReference type="CCDS" id="CCDS26611.1"/>
<dbReference type="RefSeq" id="NP_079823.2">
    <property type="nucleotide sequence ID" value="NM_025547.4"/>
</dbReference>
<dbReference type="RefSeq" id="XP_006517384.1">
    <property type="nucleotide sequence ID" value="XM_006517321.3"/>
</dbReference>
<dbReference type="RefSeq" id="XP_011242850.1">
    <property type="nucleotide sequence ID" value="XM_011244548.4"/>
</dbReference>
<dbReference type="RefSeq" id="XP_017171052.1">
    <property type="nucleotide sequence ID" value="XM_017315563.3"/>
</dbReference>
<dbReference type="RefSeq" id="XP_030103217.1">
    <property type="nucleotide sequence ID" value="XM_030247357.2"/>
</dbReference>
<dbReference type="SMR" id="Q8R3J4"/>
<dbReference type="FunCoup" id="Q8R3J4">
    <property type="interactions" value="3514"/>
</dbReference>
<dbReference type="STRING" id="10090.ENSMUSP00000021991"/>
<dbReference type="iPTMnet" id="Q8R3J4"/>
<dbReference type="PhosphoSitePlus" id="Q8R3J4"/>
<dbReference type="PaxDb" id="10090-ENSMUSP00000021991"/>
<dbReference type="PeptideAtlas" id="Q8R3J4"/>
<dbReference type="ProteomicsDB" id="286072"/>
<dbReference type="Pumba" id="Q8R3J4"/>
<dbReference type="Antibodypedia" id="1268">
    <property type="antibodies" value="63 antibodies from 23 providers"/>
</dbReference>
<dbReference type="DNASU" id="66410"/>
<dbReference type="Ensembl" id="ENSMUST00000021991.11">
    <property type="protein sequence ID" value="ENSMUSP00000021991.5"/>
    <property type="gene ID" value="ENSMUSG00000021519.12"/>
</dbReference>
<dbReference type="GeneID" id="66410"/>
<dbReference type="KEGG" id="mmu:66410"/>
<dbReference type="UCSC" id="uc007qzw.2">
    <property type="organism name" value="mouse"/>
</dbReference>
<dbReference type="AGR" id="MGI:1913660"/>
<dbReference type="CTD" id="51001"/>
<dbReference type="MGI" id="MGI:1913660">
    <property type="gene designation" value="Mterf3"/>
</dbReference>
<dbReference type="VEuPathDB" id="HostDB:ENSMUSG00000021519"/>
<dbReference type="eggNOG" id="KOG1267">
    <property type="taxonomic scope" value="Eukaryota"/>
</dbReference>
<dbReference type="GeneTree" id="ENSGT00390000005801"/>
<dbReference type="HOGENOM" id="CLU_042536_0_0_1"/>
<dbReference type="InParanoid" id="Q8R3J4"/>
<dbReference type="OMA" id="VFNTRVF"/>
<dbReference type="OrthoDB" id="637682at2759"/>
<dbReference type="PhylomeDB" id="Q8R3J4"/>
<dbReference type="TreeFam" id="TF317943"/>
<dbReference type="Reactome" id="R-MMU-5205685">
    <property type="pathway name" value="PINK1-PRKN Mediated Mitophagy"/>
</dbReference>
<dbReference type="BioGRID-ORCS" id="66410">
    <property type="hits" value="18 hits in 77 CRISPR screens"/>
</dbReference>
<dbReference type="ChiTaRS" id="Mterf3">
    <property type="organism name" value="mouse"/>
</dbReference>
<dbReference type="PRO" id="PR:Q8R3J4"/>
<dbReference type="Proteomes" id="UP000000589">
    <property type="component" value="Chromosome 13"/>
</dbReference>
<dbReference type="RNAct" id="Q8R3J4">
    <property type="molecule type" value="protein"/>
</dbReference>
<dbReference type="Bgee" id="ENSMUSG00000021519">
    <property type="expression patterns" value="Expressed in medial ganglionic eminence and 263 other cell types or tissues"/>
</dbReference>
<dbReference type="ExpressionAtlas" id="Q8R3J4">
    <property type="expression patterns" value="baseline and differential"/>
</dbReference>
<dbReference type="GO" id="GO:0005829">
    <property type="term" value="C:cytosol"/>
    <property type="evidence" value="ECO:0007669"/>
    <property type="project" value="Ensembl"/>
</dbReference>
<dbReference type="GO" id="GO:0005759">
    <property type="term" value="C:mitochondrial matrix"/>
    <property type="evidence" value="ECO:0007669"/>
    <property type="project" value="Ensembl"/>
</dbReference>
<dbReference type="GO" id="GO:0005739">
    <property type="term" value="C:mitochondrion"/>
    <property type="evidence" value="ECO:0007005"/>
    <property type="project" value="MGI"/>
</dbReference>
<dbReference type="GO" id="GO:0000976">
    <property type="term" value="F:transcription cis-regulatory region binding"/>
    <property type="evidence" value="ECO:0000250"/>
    <property type="project" value="UniProtKB"/>
</dbReference>
<dbReference type="GO" id="GO:0045892">
    <property type="term" value="P:negative regulation of DNA-templated transcription"/>
    <property type="evidence" value="ECO:0000315"/>
    <property type="project" value="UniProtKB"/>
</dbReference>
<dbReference type="GO" id="GO:0042254">
    <property type="term" value="P:ribosome biogenesis"/>
    <property type="evidence" value="ECO:0007669"/>
    <property type="project" value="UniProtKB-KW"/>
</dbReference>
<dbReference type="FunFam" id="1.25.70.10:FF:000002">
    <property type="entry name" value="transcription termination factor 3, mitochondrial"/>
    <property type="match status" value="1"/>
</dbReference>
<dbReference type="Gene3D" id="1.25.70.10">
    <property type="entry name" value="Transcription termination factor 3, mitochondrial"/>
    <property type="match status" value="1"/>
</dbReference>
<dbReference type="InterPro" id="IPR003690">
    <property type="entry name" value="MTERF"/>
</dbReference>
<dbReference type="InterPro" id="IPR038538">
    <property type="entry name" value="MTERF_sf"/>
</dbReference>
<dbReference type="PANTHER" id="PTHR13068">
    <property type="entry name" value="CGI-12 PROTEIN-RELATED"/>
    <property type="match status" value="1"/>
</dbReference>
<dbReference type="PANTHER" id="PTHR13068:SF194">
    <property type="entry name" value="TRANSCRIPTION TERMINATION FACTOR 3, MITOCHONDRIAL"/>
    <property type="match status" value="1"/>
</dbReference>
<dbReference type="Pfam" id="PF02536">
    <property type="entry name" value="mTERF"/>
    <property type="match status" value="1"/>
</dbReference>
<dbReference type="SMART" id="SM00733">
    <property type="entry name" value="Mterf"/>
    <property type="match status" value="6"/>
</dbReference>
<feature type="transit peptide" description="Mitochondrion" evidence="1">
    <location>
        <begin position="1"/>
        <end position="67"/>
    </location>
</feature>
<feature type="chain" id="PRO_0000255458" description="Transcription termination factor 3, mitochondrial">
    <location>
        <begin position="68"/>
        <end position="412"/>
    </location>
</feature>
<feature type="sequence conflict" description="In Ref. 1; BAB27006." evidence="4" ref="1">
    <original>GPF</original>
    <variation>DTY</variation>
    <location>
        <begin position="201"/>
        <end position="203"/>
    </location>
</feature>
<accession>Q8R3J4</accession>
<accession>Q9CSV1</accession>
<accession>Q9CWM7</accession>
<keyword id="KW-0238">DNA-binding</keyword>
<keyword id="KW-0496">Mitochondrion</keyword>
<keyword id="KW-1185">Reference proteome</keyword>
<keyword id="KW-0690">Ribosome biogenesis</keyword>
<keyword id="KW-0804">Transcription</keyword>
<keyword id="KW-0805">Transcription regulation</keyword>
<keyword id="KW-0809">Transit peptide</keyword>
<name>MTEF3_MOUSE</name>
<evidence type="ECO:0000250" key="1">
    <source>
        <dbReference type="UniProtKB" id="Q96E29"/>
    </source>
</evidence>
<evidence type="ECO:0000269" key="2">
    <source>
    </source>
</evidence>
<evidence type="ECO:0000269" key="3">
    <source>
    </source>
</evidence>
<evidence type="ECO:0000305" key="4"/>
<sequence length="412" mass="47357">MALLAQQLPRRFNSVKLTSFIKAKQVTKRSARAGKAVLPGFSAQPLLSSDTSFLRRGIKTYRTLFWNRFHSASTNRTKSSAESTLLPSVAEQQERILSLESELPLEEVDDLPPLSPLQSVSEEEAIQIAAYSPLPISSFTLADYVDHSKTLQKLVQLGVDLSKIEKHPDAANLLLRLDFEKHIKQILLFLKDLGLEDNQLGPFLTKNYAIFSEDLENLKTRVAYLQSKNFSKTDIARMVKNAPFLLSFSVERLDNRLGFFQKELELNVKKTRDLVVRLPRLLTGSLEPVKENMKVYHLELGFKHNEIQHMVIKIPKMLTANKRKLTEIFDYVHNVMNIPHHIIVKFPQLFNTRVFKIKERHLFLAYLGRAQYDPAKPNYVSLDKFVSFPDKIFCKEIAKASLNDFEKFLKTL</sequence>
<organism>
    <name type="scientific">Mus musculus</name>
    <name type="common">Mouse</name>
    <dbReference type="NCBI Taxonomy" id="10090"/>
    <lineage>
        <taxon>Eukaryota</taxon>
        <taxon>Metazoa</taxon>
        <taxon>Chordata</taxon>
        <taxon>Craniata</taxon>
        <taxon>Vertebrata</taxon>
        <taxon>Euteleostomi</taxon>
        <taxon>Mammalia</taxon>
        <taxon>Eutheria</taxon>
        <taxon>Euarchontoglires</taxon>
        <taxon>Glires</taxon>
        <taxon>Rodentia</taxon>
        <taxon>Myomorpha</taxon>
        <taxon>Muroidea</taxon>
        <taxon>Muridae</taxon>
        <taxon>Murinae</taxon>
        <taxon>Mus</taxon>
        <taxon>Mus</taxon>
    </lineage>
</organism>